<sequence>MKNIVLTGFMGSGKTTIGKLIAEKLDIELIDTDSEVIKEFGMTIDKIFEVHGEKKFREVETKVIERVSKLENVVISTGGGVVLNPENVKLLRENGVIYFLYAPAESILKRLKDDDTRPLLKNGDKLSNIIRLLNMRMPFYKNCDFEINTDILTPELAAEKIISIHLAKESKR</sequence>
<name>AROK_CALBD</name>
<proteinExistence type="inferred from homology"/>
<comment type="function">
    <text evidence="1">Catalyzes the specific phosphorylation of the 3-hydroxyl group of shikimic acid using ATP as a cosubstrate.</text>
</comment>
<comment type="catalytic activity">
    <reaction evidence="1">
        <text>shikimate + ATP = 3-phosphoshikimate + ADP + H(+)</text>
        <dbReference type="Rhea" id="RHEA:13121"/>
        <dbReference type="ChEBI" id="CHEBI:15378"/>
        <dbReference type="ChEBI" id="CHEBI:30616"/>
        <dbReference type="ChEBI" id="CHEBI:36208"/>
        <dbReference type="ChEBI" id="CHEBI:145989"/>
        <dbReference type="ChEBI" id="CHEBI:456216"/>
        <dbReference type="EC" id="2.7.1.71"/>
    </reaction>
</comment>
<comment type="cofactor">
    <cofactor evidence="1">
        <name>Mg(2+)</name>
        <dbReference type="ChEBI" id="CHEBI:18420"/>
    </cofactor>
    <text evidence="1">Binds 1 Mg(2+) ion per subunit.</text>
</comment>
<comment type="pathway">
    <text evidence="1">Metabolic intermediate biosynthesis; chorismate biosynthesis; chorismate from D-erythrose 4-phosphate and phosphoenolpyruvate: step 5/7.</text>
</comment>
<comment type="subunit">
    <text evidence="1">Monomer.</text>
</comment>
<comment type="subcellular location">
    <subcellularLocation>
        <location evidence="1">Cytoplasm</location>
    </subcellularLocation>
</comment>
<comment type="similarity">
    <text evidence="1">Belongs to the shikimate kinase family.</text>
</comment>
<dbReference type="EC" id="2.7.1.71" evidence="1"/>
<dbReference type="EMBL" id="CP001393">
    <property type="protein sequence ID" value="ACM60794.1"/>
    <property type="molecule type" value="Genomic_DNA"/>
</dbReference>
<dbReference type="RefSeq" id="WP_015908124.1">
    <property type="nucleotide sequence ID" value="NC_012034.1"/>
</dbReference>
<dbReference type="SMR" id="B9MKD6"/>
<dbReference type="STRING" id="521460.Athe_1700"/>
<dbReference type="GeneID" id="31773050"/>
<dbReference type="KEGG" id="ate:Athe_1700"/>
<dbReference type="eggNOG" id="COG0703">
    <property type="taxonomic scope" value="Bacteria"/>
</dbReference>
<dbReference type="HOGENOM" id="CLU_057607_4_0_9"/>
<dbReference type="UniPathway" id="UPA00053">
    <property type="reaction ID" value="UER00088"/>
</dbReference>
<dbReference type="Proteomes" id="UP000007723">
    <property type="component" value="Chromosome"/>
</dbReference>
<dbReference type="GO" id="GO:0005829">
    <property type="term" value="C:cytosol"/>
    <property type="evidence" value="ECO:0007669"/>
    <property type="project" value="TreeGrafter"/>
</dbReference>
<dbReference type="GO" id="GO:0005524">
    <property type="term" value="F:ATP binding"/>
    <property type="evidence" value="ECO:0007669"/>
    <property type="project" value="UniProtKB-UniRule"/>
</dbReference>
<dbReference type="GO" id="GO:0000287">
    <property type="term" value="F:magnesium ion binding"/>
    <property type="evidence" value="ECO:0007669"/>
    <property type="project" value="UniProtKB-UniRule"/>
</dbReference>
<dbReference type="GO" id="GO:0004765">
    <property type="term" value="F:shikimate kinase activity"/>
    <property type="evidence" value="ECO:0007669"/>
    <property type="project" value="UniProtKB-UniRule"/>
</dbReference>
<dbReference type="GO" id="GO:0008652">
    <property type="term" value="P:amino acid biosynthetic process"/>
    <property type="evidence" value="ECO:0007669"/>
    <property type="project" value="UniProtKB-KW"/>
</dbReference>
<dbReference type="GO" id="GO:0009073">
    <property type="term" value="P:aromatic amino acid family biosynthetic process"/>
    <property type="evidence" value="ECO:0007669"/>
    <property type="project" value="UniProtKB-KW"/>
</dbReference>
<dbReference type="GO" id="GO:0009423">
    <property type="term" value="P:chorismate biosynthetic process"/>
    <property type="evidence" value="ECO:0007669"/>
    <property type="project" value="UniProtKB-UniRule"/>
</dbReference>
<dbReference type="CDD" id="cd00464">
    <property type="entry name" value="SK"/>
    <property type="match status" value="1"/>
</dbReference>
<dbReference type="Gene3D" id="3.40.50.300">
    <property type="entry name" value="P-loop containing nucleotide triphosphate hydrolases"/>
    <property type="match status" value="1"/>
</dbReference>
<dbReference type="HAMAP" id="MF_00109">
    <property type="entry name" value="Shikimate_kinase"/>
    <property type="match status" value="1"/>
</dbReference>
<dbReference type="InterPro" id="IPR027417">
    <property type="entry name" value="P-loop_NTPase"/>
</dbReference>
<dbReference type="InterPro" id="IPR031322">
    <property type="entry name" value="Shikimate/glucono_kinase"/>
</dbReference>
<dbReference type="InterPro" id="IPR000623">
    <property type="entry name" value="Shikimate_kinase/TSH1"/>
</dbReference>
<dbReference type="InterPro" id="IPR023000">
    <property type="entry name" value="Shikimate_kinase_CS"/>
</dbReference>
<dbReference type="PANTHER" id="PTHR21087">
    <property type="entry name" value="SHIKIMATE KINASE"/>
    <property type="match status" value="1"/>
</dbReference>
<dbReference type="PANTHER" id="PTHR21087:SF16">
    <property type="entry name" value="SHIKIMATE KINASE 1, CHLOROPLASTIC"/>
    <property type="match status" value="1"/>
</dbReference>
<dbReference type="Pfam" id="PF01202">
    <property type="entry name" value="SKI"/>
    <property type="match status" value="1"/>
</dbReference>
<dbReference type="PRINTS" id="PR01100">
    <property type="entry name" value="SHIKIMTKNASE"/>
</dbReference>
<dbReference type="SUPFAM" id="SSF52540">
    <property type="entry name" value="P-loop containing nucleoside triphosphate hydrolases"/>
    <property type="match status" value="1"/>
</dbReference>
<dbReference type="PROSITE" id="PS01128">
    <property type="entry name" value="SHIKIMATE_KINASE"/>
    <property type="match status" value="1"/>
</dbReference>
<protein>
    <recommendedName>
        <fullName evidence="1">Shikimate kinase</fullName>
        <shortName evidence="1">SK</shortName>
        <ecNumber evidence="1">2.7.1.71</ecNumber>
    </recommendedName>
</protein>
<reference key="1">
    <citation type="submission" date="2009-01" db="EMBL/GenBank/DDBJ databases">
        <title>Complete sequence of chromosome of Caldicellulosiruptor becscii DSM 6725.</title>
        <authorList>
            <person name="Lucas S."/>
            <person name="Copeland A."/>
            <person name="Lapidus A."/>
            <person name="Glavina del Rio T."/>
            <person name="Tice H."/>
            <person name="Bruce D."/>
            <person name="Goodwin L."/>
            <person name="Pitluck S."/>
            <person name="Sims D."/>
            <person name="Meincke L."/>
            <person name="Brettin T."/>
            <person name="Detter J.C."/>
            <person name="Han C."/>
            <person name="Larimer F."/>
            <person name="Land M."/>
            <person name="Hauser L."/>
            <person name="Kyrpides N."/>
            <person name="Ovchinnikova G."/>
            <person name="Kataeva I."/>
            <person name="Adams M.W.W."/>
        </authorList>
    </citation>
    <scope>NUCLEOTIDE SEQUENCE [LARGE SCALE GENOMIC DNA]</scope>
    <source>
        <strain>ATCC BAA-1888 / DSM 6725 / KCTC 15123 / Z-1320</strain>
    </source>
</reference>
<keyword id="KW-0028">Amino-acid biosynthesis</keyword>
<keyword id="KW-0057">Aromatic amino acid biosynthesis</keyword>
<keyword id="KW-0067">ATP-binding</keyword>
<keyword id="KW-0963">Cytoplasm</keyword>
<keyword id="KW-0418">Kinase</keyword>
<keyword id="KW-0460">Magnesium</keyword>
<keyword id="KW-0479">Metal-binding</keyword>
<keyword id="KW-0547">Nucleotide-binding</keyword>
<keyword id="KW-0808">Transferase</keyword>
<evidence type="ECO:0000255" key="1">
    <source>
        <dbReference type="HAMAP-Rule" id="MF_00109"/>
    </source>
</evidence>
<accession>B9MKD6</accession>
<gene>
    <name evidence="1" type="primary">aroK</name>
    <name type="ordered locus">Athe_1700</name>
</gene>
<feature type="chain" id="PRO_1000119042" description="Shikimate kinase">
    <location>
        <begin position="1"/>
        <end position="172"/>
    </location>
</feature>
<feature type="binding site" evidence="1">
    <location>
        <begin position="11"/>
        <end position="16"/>
    </location>
    <ligand>
        <name>ATP</name>
        <dbReference type="ChEBI" id="CHEBI:30616"/>
    </ligand>
</feature>
<feature type="binding site" evidence="1">
    <location>
        <position position="15"/>
    </location>
    <ligand>
        <name>Mg(2+)</name>
        <dbReference type="ChEBI" id="CHEBI:18420"/>
    </ligand>
</feature>
<feature type="binding site" evidence="1">
    <location>
        <position position="33"/>
    </location>
    <ligand>
        <name>substrate</name>
    </ligand>
</feature>
<feature type="binding site" evidence="1">
    <location>
        <position position="57"/>
    </location>
    <ligand>
        <name>substrate</name>
    </ligand>
</feature>
<feature type="binding site" evidence="1">
    <location>
        <position position="79"/>
    </location>
    <ligand>
        <name>substrate</name>
    </ligand>
</feature>
<feature type="binding site" evidence="1">
    <location>
        <position position="117"/>
    </location>
    <ligand>
        <name>ATP</name>
        <dbReference type="ChEBI" id="CHEBI:30616"/>
    </ligand>
</feature>
<feature type="binding site" evidence="1">
    <location>
        <position position="136"/>
    </location>
    <ligand>
        <name>substrate</name>
    </ligand>
</feature>
<organism>
    <name type="scientific">Caldicellulosiruptor bescii (strain ATCC BAA-1888 / DSM 6725 / KCTC 15123 / Z-1320)</name>
    <name type="common">Anaerocellum thermophilum</name>
    <dbReference type="NCBI Taxonomy" id="521460"/>
    <lineage>
        <taxon>Bacteria</taxon>
        <taxon>Bacillati</taxon>
        <taxon>Bacillota</taxon>
        <taxon>Bacillota incertae sedis</taxon>
        <taxon>Caldicellulosiruptorales</taxon>
        <taxon>Caldicellulosiruptoraceae</taxon>
        <taxon>Caldicellulosiruptor</taxon>
    </lineage>
</organism>